<sequence>MSALLSPDQLEADLRAIGARLYHDQHPFHALLHHGKLDRGQVQAWALNRFEYQRCIPLKDAAILARMEDPTLRRIWRQRIVDHDGNSATDGGIARWLHLTDALGLDRTLVESGRALLPGTRFAVQAYLQFVSEKSLLEAIASSLTELFAPNIIGQRVAGMLKHYDFVSSDALAYFEHRLTEAPRDSDFALDYVKQHADTVEKQALVKAALHFKCSVLWAQLDALHVAYVTPGIVWPDAFVPDRDASRVAA</sequence>
<dbReference type="EC" id="1.3.3.11" evidence="1"/>
<dbReference type="EMBL" id="AP008229">
    <property type="protein sequence ID" value="BAE68390.1"/>
    <property type="molecule type" value="Genomic_DNA"/>
</dbReference>
<dbReference type="RefSeq" id="WP_011408174.1">
    <property type="nucleotide sequence ID" value="NC_007705.1"/>
</dbReference>
<dbReference type="SMR" id="Q2P4Y7"/>
<dbReference type="KEGG" id="xom:XOO1635"/>
<dbReference type="HOGENOM" id="CLU_080136_0_0_6"/>
<dbReference type="UniPathway" id="UPA00539"/>
<dbReference type="GO" id="GO:0033732">
    <property type="term" value="F:pyrroloquinoline-quinone synthase activity"/>
    <property type="evidence" value="ECO:0007669"/>
    <property type="project" value="UniProtKB-EC"/>
</dbReference>
<dbReference type="GO" id="GO:0018189">
    <property type="term" value="P:pyrroloquinoline quinone biosynthetic process"/>
    <property type="evidence" value="ECO:0007669"/>
    <property type="project" value="UniProtKB-UniRule"/>
</dbReference>
<dbReference type="GO" id="GO:0006790">
    <property type="term" value="P:sulfur compound metabolic process"/>
    <property type="evidence" value="ECO:0007669"/>
    <property type="project" value="UniProtKB-ARBA"/>
</dbReference>
<dbReference type="Gene3D" id="1.20.910.10">
    <property type="entry name" value="Heme oxygenase-like"/>
    <property type="match status" value="1"/>
</dbReference>
<dbReference type="HAMAP" id="MF_00654">
    <property type="entry name" value="PQQ_syn_PqqC"/>
    <property type="match status" value="1"/>
</dbReference>
<dbReference type="InterPro" id="IPR016084">
    <property type="entry name" value="Haem_Oase-like_multi-hlx"/>
</dbReference>
<dbReference type="InterPro" id="IPR011845">
    <property type="entry name" value="PqqC"/>
</dbReference>
<dbReference type="InterPro" id="IPR039068">
    <property type="entry name" value="PqqC-like"/>
</dbReference>
<dbReference type="InterPro" id="IPR004305">
    <property type="entry name" value="Thiaminase-2/PQQC"/>
</dbReference>
<dbReference type="NCBIfam" id="TIGR02111">
    <property type="entry name" value="PQQ_syn_pqqC"/>
    <property type="match status" value="1"/>
</dbReference>
<dbReference type="PANTHER" id="PTHR40279:SF3">
    <property type="entry name" value="4-AMINOBENZOATE SYNTHASE"/>
    <property type="match status" value="1"/>
</dbReference>
<dbReference type="PANTHER" id="PTHR40279">
    <property type="entry name" value="PQQC-LIKE PROTEIN"/>
    <property type="match status" value="1"/>
</dbReference>
<dbReference type="Pfam" id="PF03070">
    <property type="entry name" value="TENA_THI-4"/>
    <property type="match status" value="1"/>
</dbReference>
<dbReference type="SUPFAM" id="SSF48613">
    <property type="entry name" value="Heme oxygenase-like"/>
    <property type="match status" value="1"/>
</dbReference>
<organism>
    <name type="scientific">Xanthomonas oryzae pv. oryzae (strain MAFF 311018)</name>
    <dbReference type="NCBI Taxonomy" id="342109"/>
    <lineage>
        <taxon>Bacteria</taxon>
        <taxon>Pseudomonadati</taxon>
        <taxon>Pseudomonadota</taxon>
        <taxon>Gammaproteobacteria</taxon>
        <taxon>Lysobacterales</taxon>
        <taxon>Lysobacteraceae</taxon>
        <taxon>Xanthomonas</taxon>
    </lineage>
</organism>
<comment type="function">
    <text evidence="1">Ring cyclization and eight-electron oxidation of 3a-(2-amino-2-carboxyethyl)-4,5-dioxo-4,5,6,7,8,9-hexahydroquinoline-7,9-dicarboxylic-acid to PQQ.</text>
</comment>
<comment type="catalytic activity">
    <reaction evidence="1">
        <text>6-(2-amino-2-carboxyethyl)-7,8-dioxo-1,2,3,4,7,8-hexahydroquinoline-2,4-dicarboxylate + 3 O2 = pyrroloquinoline quinone + 2 H2O2 + 2 H2O + H(+)</text>
        <dbReference type="Rhea" id="RHEA:10692"/>
        <dbReference type="ChEBI" id="CHEBI:15377"/>
        <dbReference type="ChEBI" id="CHEBI:15378"/>
        <dbReference type="ChEBI" id="CHEBI:15379"/>
        <dbReference type="ChEBI" id="CHEBI:16240"/>
        <dbReference type="ChEBI" id="CHEBI:58442"/>
        <dbReference type="ChEBI" id="CHEBI:58778"/>
        <dbReference type="EC" id="1.3.3.11"/>
    </reaction>
</comment>
<comment type="pathway">
    <text evidence="1">Cofactor biosynthesis; pyrroloquinoline quinone biosynthesis.</text>
</comment>
<comment type="similarity">
    <text evidence="1">Belongs to the PqqC family.</text>
</comment>
<reference key="1">
    <citation type="journal article" date="2005" name="Jpn. Agric. Res. Q.">
        <title>Genome sequence of Xanthomonas oryzae pv. oryzae suggests contribution of large numbers of effector genes and insertion sequences to its race diversity.</title>
        <authorList>
            <person name="Ochiai H."/>
            <person name="Inoue Y."/>
            <person name="Takeya M."/>
            <person name="Sasaki A."/>
            <person name="Kaku H."/>
        </authorList>
    </citation>
    <scope>NUCLEOTIDE SEQUENCE [LARGE SCALE GENOMIC DNA]</scope>
    <source>
        <strain>MAFF 311018</strain>
    </source>
</reference>
<gene>
    <name evidence="1" type="primary">pqqC</name>
    <name type="ordered locus">XOO1635</name>
</gene>
<name>PQQC_XANOM</name>
<keyword id="KW-0560">Oxidoreductase</keyword>
<keyword id="KW-0884">PQQ biosynthesis</keyword>
<proteinExistence type="inferred from homology"/>
<feature type="chain" id="PRO_1000061682" description="Pyrroloquinoline-quinone synthase">
    <location>
        <begin position="1"/>
        <end position="250"/>
    </location>
</feature>
<accession>Q2P4Y7</accession>
<evidence type="ECO:0000255" key="1">
    <source>
        <dbReference type="HAMAP-Rule" id="MF_00654"/>
    </source>
</evidence>
<protein>
    <recommendedName>
        <fullName evidence="1">Pyrroloquinoline-quinone synthase</fullName>
        <ecNumber evidence="1">1.3.3.11</ecNumber>
    </recommendedName>
    <alternativeName>
        <fullName evidence="1">Coenzyme PQQ synthesis protein C</fullName>
    </alternativeName>
    <alternativeName>
        <fullName evidence="1">Pyrroloquinoline quinone biosynthesis protein C</fullName>
    </alternativeName>
</protein>